<reference key="1">
    <citation type="journal article" date="1998" name="Genes Dev.">
        <title>A novel Myb homolog initiates Dictyostelium development by induction of adenylyl cyclase expression.</title>
        <authorList>
            <person name="Otsuka H."/>
            <person name="Van Haastert P.J.M."/>
        </authorList>
    </citation>
    <scope>NUCLEOTIDE SEQUENCE [GENOMIC DNA]</scope>
    <scope>FUNCTION</scope>
    <scope>DEVELOPMENTAL STAGE</scope>
    <scope>DISRUPTION PHENOTYPE</scope>
    <source>
        <strain>AX3 / DH1</strain>
    </source>
</reference>
<reference key="2">
    <citation type="journal article" date="2002" name="Nature">
        <title>Sequence and analysis of chromosome 2 of Dictyostelium discoideum.</title>
        <authorList>
            <person name="Gloeckner G."/>
            <person name="Eichinger L."/>
            <person name="Szafranski K."/>
            <person name="Pachebat J.A."/>
            <person name="Bankier A.T."/>
            <person name="Dear P.H."/>
            <person name="Lehmann R."/>
            <person name="Baumgart C."/>
            <person name="Parra G."/>
            <person name="Abril J.F."/>
            <person name="Guigo R."/>
            <person name="Kumpf K."/>
            <person name="Tunggal B."/>
            <person name="Cox E.C."/>
            <person name="Quail M.A."/>
            <person name="Platzer M."/>
            <person name="Rosenthal A."/>
            <person name="Noegel A.A."/>
        </authorList>
    </citation>
    <scope>NUCLEOTIDE SEQUENCE [LARGE SCALE GENOMIC DNA]</scope>
    <source>
        <strain>AX4</strain>
    </source>
</reference>
<reference key="3">
    <citation type="journal article" date="2005" name="Nature">
        <title>The genome of the social amoeba Dictyostelium discoideum.</title>
        <authorList>
            <person name="Eichinger L."/>
            <person name="Pachebat J.A."/>
            <person name="Gloeckner G."/>
            <person name="Rajandream M.A."/>
            <person name="Sucgang R."/>
            <person name="Berriman M."/>
            <person name="Song J."/>
            <person name="Olsen R."/>
            <person name="Szafranski K."/>
            <person name="Xu Q."/>
            <person name="Tunggal B."/>
            <person name="Kummerfeld S."/>
            <person name="Madera M."/>
            <person name="Konfortov B.A."/>
            <person name="Rivero F."/>
            <person name="Bankier A.T."/>
            <person name="Lehmann R."/>
            <person name="Hamlin N."/>
            <person name="Davies R."/>
            <person name="Gaudet P."/>
            <person name="Fey P."/>
            <person name="Pilcher K."/>
            <person name="Chen G."/>
            <person name="Saunders D."/>
            <person name="Sodergren E.J."/>
            <person name="Davis P."/>
            <person name="Kerhornou A."/>
            <person name="Nie X."/>
            <person name="Hall N."/>
            <person name="Anjard C."/>
            <person name="Hemphill L."/>
            <person name="Bason N."/>
            <person name="Farbrother P."/>
            <person name="Desany B."/>
            <person name="Just E."/>
            <person name="Morio T."/>
            <person name="Rost R."/>
            <person name="Churcher C.M."/>
            <person name="Cooper J."/>
            <person name="Haydock S."/>
            <person name="van Driessche N."/>
            <person name="Cronin A."/>
            <person name="Goodhead I."/>
            <person name="Muzny D.M."/>
            <person name="Mourier T."/>
            <person name="Pain A."/>
            <person name="Lu M."/>
            <person name="Harper D."/>
            <person name="Lindsay R."/>
            <person name="Hauser H."/>
            <person name="James K.D."/>
            <person name="Quiles M."/>
            <person name="Madan Babu M."/>
            <person name="Saito T."/>
            <person name="Buchrieser C."/>
            <person name="Wardroper A."/>
            <person name="Felder M."/>
            <person name="Thangavelu M."/>
            <person name="Johnson D."/>
            <person name="Knights A."/>
            <person name="Loulseged H."/>
            <person name="Mungall K.L."/>
            <person name="Oliver K."/>
            <person name="Price C."/>
            <person name="Quail M.A."/>
            <person name="Urushihara H."/>
            <person name="Hernandez J."/>
            <person name="Rabbinowitsch E."/>
            <person name="Steffen D."/>
            <person name="Sanders M."/>
            <person name="Ma J."/>
            <person name="Kohara Y."/>
            <person name="Sharp S."/>
            <person name="Simmonds M.N."/>
            <person name="Spiegler S."/>
            <person name="Tivey A."/>
            <person name="Sugano S."/>
            <person name="White B."/>
            <person name="Walker D."/>
            <person name="Woodward J.R."/>
            <person name="Winckler T."/>
            <person name="Tanaka Y."/>
            <person name="Shaulsky G."/>
            <person name="Schleicher M."/>
            <person name="Weinstock G.M."/>
            <person name="Rosenthal A."/>
            <person name="Cox E.C."/>
            <person name="Chisholm R.L."/>
            <person name="Gibbs R.A."/>
            <person name="Loomis W.F."/>
            <person name="Platzer M."/>
            <person name="Kay R.R."/>
            <person name="Williams J.G."/>
            <person name="Dear P.H."/>
            <person name="Noegel A.A."/>
            <person name="Barrell B.G."/>
            <person name="Kuspa A."/>
        </authorList>
    </citation>
    <scope>NUCLEOTIDE SEQUENCE [LARGE SCALE GENOMIC DNA]</scope>
    <source>
        <strain>AX4</strain>
    </source>
</reference>
<feature type="chain" id="PRO_0000328226" description="Myb-like protein B">
    <location>
        <begin position="1"/>
        <end position="711"/>
    </location>
</feature>
<feature type="domain" description="HTH myb-type 1" evidence="1">
    <location>
        <begin position="428"/>
        <end position="490"/>
    </location>
</feature>
<feature type="domain" description="HTH myb-type 2" evidence="1">
    <location>
        <begin position="491"/>
        <end position="542"/>
    </location>
</feature>
<feature type="domain" description="Myb-like">
    <location>
        <begin position="540"/>
        <end position="598"/>
    </location>
</feature>
<feature type="DNA-binding region" description="H-T-H motif" evidence="1">
    <location>
        <begin position="462"/>
        <end position="486"/>
    </location>
</feature>
<feature type="DNA-binding region" description="H-T-H motif" evidence="1">
    <location>
        <begin position="514"/>
        <end position="538"/>
    </location>
</feature>
<feature type="region of interest" description="Disordered" evidence="2">
    <location>
        <begin position="24"/>
        <end position="70"/>
    </location>
</feature>
<feature type="region of interest" description="Disordered" evidence="2">
    <location>
        <begin position="113"/>
        <end position="235"/>
    </location>
</feature>
<feature type="region of interest" description="Disordered" evidence="2">
    <location>
        <begin position="598"/>
        <end position="640"/>
    </location>
</feature>
<feature type="compositionally biased region" description="Low complexity" evidence="2">
    <location>
        <begin position="24"/>
        <end position="50"/>
    </location>
</feature>
<feature type="compositionally biased region" description="Polar residues" evidence="2">
    <location>
        <begin position="113"/>
        <end position="139"/>
    </location>
</feature>
<feature type="compositionally biased region" description="Polar residues" evidence="2">
    <location>
        <begin position="148"/>
        <end position="157"/>
    </location>
</feature>
<feature type="compositionally biased region" description="Low complexity" evidence="2">
    <location>
        <begin position="158"/>
        <end position="187"/>
    </location>
</feature>
<feature type="compositionally biased region" description="Low complexity" evidence="2">
    <location>
        <begin position="198"/>
        <end position="235"/>
    </location>
</feature>
<feature type="sequence conflict" description="In Ref. 1; CAA05357." evidence="4" ref="1">
    <original>Q</original>
    <variation>QQQ</variation>
    <location>
        <position position="51"/>
    </location>
</feature>
<feature type="sequence conflict" description="In Ref. 1; CAA05357." evidence="4" ref="1">
    <location>
        <position position="172"/>
    </location>
</feature>
<feature type="sequence conflict" description="In Ref. 1; CAA05357." evidence="4" ref="1">
    <location>
        <begin position="202"/>
        <end position="221"/>
    </location>
</feature>
<feature type="sequence conflict" description="In Ref. 1; CAA05357." evidence="4" ref="1">
    <original>V</original>
    <variation>VKQMLLKV</variation>
    <location>
        <position position="331"/>
    </location>
</feature>
<feature type="sequence conflict" description="In Ref. 1; CAA05357." evidence="4" ref="1">
    <original>I</original>
    <variation>N</variation>
    <location>
        <position position="666"/>
    </location>
</feature>
<gene>
    <name type="primary">mybB</name>
    <name type="ORF">DDB_G0275445</name>
</gene>
<sequence>MTAIFPNSNIPFYYWASTNAQPQQPQQSIQQQQQQQQQQQQQQQQQQQQQQHHHHQNIPPTPQPIFSPQLINKNFGCYGTSNQIPMIPQALFPQQTFNYSGLPLCPSPPNYNNYHTITNSPPHQIHSPQLTIDQHSPPTCVSGELSPTPLSSSTGFSNNNNNNNNNNNNNNNSNSNNNINNNNNNNIKRSYSAMMEENNYPNNNNNNNNNNNNNNNNNNNNNNNNNNNNNNIINNNINSSGSISSYSNNSCIEDDYSSDKHCSDKESSNDCDDDADSYFEEYEDDQEAIRVSITPFVNLICKTPGITIPIIKIFSECSKEEITVKQMLLKVSLFLKIIIKIKIKIKIKILIFYFLFFKKIKNLCLEFNLDNSIHNTLIHSLVKIDGDIKMVKYLIDNGISEQELEFTKDILLTSNSQEIIKKKRERKRESISRGIRSPPNKWTKEESQNLIKLVTENGDKQWKKIATKLGGGKTGAQCAQHWKRVLSPEIKKGSWDEAEEELLFQLVDKHGQSWKNVAIEIKTRTDIQCRYQYFKAIMSRQTEWNQLEDDILTKKIKLMTQNNEKISFQQVSKHLARAKTTKIPRTALECKSRWSQLNSTNVNNNNNNNNNSITTSSSNTNQQQQSTMVTPTSSPLSSPIPMSTPIINNSMPQQQVQQIQQQQISIQPYPQSFIQETQGFYRGNDQMQYHIQNQTIPQYHHQHNNNPLLML</sequence>
<protein>
    <recommendedName>
        <fullName>Myb-like protein B</fullName>
    </recommendedName>
    <alternativeName>
        <fullName>Transcription factor Myb2</fullName>
    </alternativeName>
</protein>
<evidence type="ECO:0000255" key="1">
    <source>
        <dbReference type="PROSITE-ProRule" id="PRU00625"/>
    </source>
</evidence>
<evidence type="ECO:0000256" key="2">
    <source>
        <dbReference type="SAM" id="MobiDB-lite"/>
    </source>
</evidence>
<evidence type="ECO:0000269" key="3">
    <source>
    </source>
</evidence>
<evidence type="ECO:0000305" key="4"/>
<accession>O15816</accession>
<accession>Q553D5</accession>
<accession>Q8MMQ3</accession>
<name>MYBB_DICDI</name>
<dbReference type="EMBL" id="AJ002383">
    <property type="protein sequence ID" value="CAA05357.1"/>
    <property type="status" value="ALT_FRAME"/>
    <property type="molecule type" value="Genomic_DNA"/>
</dbReference>
<dbReference type="EMBL" id="AAFI02000013">
    <property type="protein sequence ID" value="EAL69473.1"/>
    <property type="molecule type" value="Genomic_DNA"/>
</dbReference>
<dbReference type="RefSeq" id="XP_643483.1">
    <property type="nucleotide sequence ID" value="XM_638391.1"/>
</dbReference>
<dbReference type="SMR" id="O15816"/>
<dbReference type="FunCoup" id="O15816">
    <property type="interactions" value="290"/>
</dbReference>
<dbReference type="STRING" id="44689.O15816"/>
<dbReference type="GlyGen" id="O15816">
    <property type="glycosylation" value="1 site"/>
</dbReference>
<dbReference type="PaxDb" id="44689-DDB0215356"/>
<dbReference type="EnsemblProtists" id="EAL69473">
    <property type="protein sequence ID" value="EAL69473"/>
    <property type="gene ID" value="DDB_G0275445"/>
</dbReference>
<dbReference type="GeneID" id="8620064"/>
<dbReference type="KEGG" id="ddi:DDB_G0275445"/>
<dbReference type="dictyBase" id="DDB_G0275445">
    <property type="gene designation" value="mybB"/>
</dbReference>
<dbReference type="VEuPathDB" id="AmoebaDB:DDB_G0275445"/>
<dbReference type="eggNOG" id="KOG0048">
    <property type="taxonomic scope" value="Eukaryota"/>
</dbReference>
<dbReference type="HOGENOM" id="CLU_388538_0_0_1"/>
<dbReference type="InParanoid" id="O15816"/>
<dbReference type="OMA" id="IMSRQTE"/>
<dbReference type="PRO" id="PR:O15816"/>
<dbReference type="Proteomes" id="UP000002195">
    <property type="component" value="Chromosome 2"/>
</dbReference>
<dbReference type="GO" id="GO:0005634">
    <property type="term" value="C:nucleus"/>
    <property type="evidence" value="ECO:0000318"/>
    <property type="project" value="GO_Central"/>
</dbReference>
<dbReference type="GO" id="GO:0003677">
    <property type="term" value="F:DNA binding"/>
    <property type="evidence" value="ECO:0000250"/>
    <property type="project" value="dictyBase"/>
</dbReference>
<dbReference type="GO" id="GO:0000981">
    <property type="term" value="F:DNA-binding transcription factor activity, RNA polymerase II-specific"/>
    <property type="evidence" value="ECO:0000318"/>
    <property type="project" value="GO_Central"/>
</dbReference>
<dbReference type="GO" id="GO:0000978">
    <property type="term" value="F:RNA polymerase II cis-regulatory region sequence-specific DNA binding"/>
    <property type="evidence" value="ECO:0000318"/>
    <property type="project" value="GO_Central"/>
</dbReference>
<dbReference type="GO" id="GO:0031152">
    <property type="term" value="P:aggregation involved in sorocarp development"/>
    <property type="evidence" value="ECO:0000315"/>
    <property type="project" value="dictyBase"/>
</dbReference>
<dbReference type="GO" id="GO:0006355">
    <property type="term" value="P:regulation of DNA-templated transcription"/>
    <property type="evidence" value="ECO:0000318"/>
    <property type="project" value="GO_Central"/>
</dbReference>
<dbReference type="CDD" id="cd00167">
    <property type="entry name" value="SANT"/>
    <property type="match status" value="3"/>
</dbReference>
<dbReference type="FunFam" id="1.10.10.60:FF:000563">
    <property type="entry name" value="Putative myb transcription factor"/>
    <property type="match status" value="1"/>
</dbReference>
<dbReference type="Gene3D" id="1.10.10.60">
    <property type="entry name" value="Homeodomain-like"/>
    <property type="match status" value="2"/>
</dbReference>
<dbReference type="InterPro" id="IPR009057">
    <property type="entry name" value="Homeodomain-like_sf"/>
</dbReference>
<dbReference type="InterPro" id="IPR051575">
    <property type="entry name" value="Myb-like_DNA-bd"/>
</dbReference>
<dbReference type="InterPro" id="IPR017930">
    <property type="entry name" value="Myb_dom"/>
</dbReference>
<dbReference type="InterPro" id="IPR001005">
    <property type="entry name" value="SANT/Myb"/>
</dbReference>
<dbReference type="PANTHER" id="PTHR46621">
    <property type="entry name" value="SNRNA-ACTIVATING PROTEIN COMPLEX SUBUNIT 4"/>
    <property type="match status" value="1"/>
</dbReference>
<dbReference type="PANTHER" id="PTHR46621:SF1">
    <property type="entry name" value="SNRNA-ACTIVATING PROTEIN COMPLEX SUBUNIT 4"/>
    <property type="match status" value="1"/>
</dbReference>
<dbReference type="Pfam" id="PF13921">
    <property type="entry name" value="Myb_DNA-bind_6"/>
    <property type="match status" value="1"/>
</dbReference>
<dbReference type="SMART" id="SM00717">
    <property type="entry name" value="SANT"/>
    <property type="match status" value="3"/>
</dbReference>
<dbReference type="SUPFAM" id="SSF46689">
    <property type="entry name" value="Homeodomain-like"/>
    <property type="match status" value="1"/>
</dbReference>
<dbReference type="PROSITE" id="PS51294">
    <property type="entry name" value="HTH_MYB"/>
    <property type="match status" value="2"/>
</dbReference>
<comment type="function">
    <text evidence="3">Transcriptional activator that initiates multicellular development by induction of adenylyl cyclase expression.</text>
</comment>
<comment type="subcellular location">
    <subcellularLocation>
        <location evidence="1">Nucleus</location>
    </subcellularLocation>
</comment>
<comment type="developmental stage">
    <text evidence="3">Expressed in vegetative cells, increases about 5-fold during the first 2 hours of starvation and decreases rapidly during the subsequent 4 hours of starvation.</text>
</comment>
<comment type="disruption phenotype">
    <text evidence="3">Cells display an aggregate-less phenotype.</text>
</comment>
<comment type="sequence caution" evidence="4">
    <conflict type="frameshift">
        <sequence resource="EMBL-CDS" id="CAA05357"/>
    </conflict>
</comment>
<organism>
    <name type="scientific">Dictyostelium discoideum</name>
    <name type="common">Social amoeba</name>
    <dbReference type="NCBI Taxonomy" id="44689"/>
    <lineage>
        <taxon>Eukaryota</taxon>
        <taxon>Amoebozoa</taxon>
        <taxon>Evosea</taxon>
        <taxon>Eumycetozoa</taxon>
        <taxon>Dictyostelia</taxon>
        <taxon>Dictyosteliales</taxon>
        <taxon>Dictyosteliaceae</taxon>
        <taxon>Dictyostelium</taxon>
    </lineage>
</organism>
<proteinExistence type="evidence at transcript level"/>
<keyword id="KW-0010">Activator</keyword>
<keyword id="KW-0217">Developmental protein</keyword>
<keyword id="KW-0238">DNA-binding</keyword>
<keyword id="KW-0539">Nucleus</keyword>
<keyword id="KW-1185">Reference proteome</keyword>
<keyword id="KW-0677">Repeat</keyword>
<keyword id="KW-0804">Transcription</keyword>
<keyword id="KW-0805">Transcription regulation</keyword>